<reference key="1">
    <citation type="submission" date="1999-07" db="UniProtKB">
        <title>Analysis of phytoplasmal proteins isolated by two dimensional gel electrophoresis.</title>
        <authorList>
            <person name="Zhon B."/>
            <person name="Tanaka M."/>
            <person name="Matsuda I."/>
        </authorList>
    </citation>
    <scope>PROTEIN SEQUENCE</scope>
    <source>
        <strain>OY-W</strain>
    </source>
</reference>
<accession>P81959</accession>
<proteinExistence type="evidence at protein level"/>
<comment type="miscellaneous">
    <text>On the 2D-gel the determined MW of this unknown protein is: 31.6 kDa.</text>
</comment>
<protein>
    <recommendedName>
        <fullName>Unknown 31.6 kDa protein from 2D-PAGE</fullName>
    </recommendedName>
</protein>
<organism>
    <name type="scientific">Onion yellows phytoplasma</name>
    <dbReference type="NCBI Taxonomy" id="100379"/>
    <lineage>
        <taxon>Bacteria</taxon>
        <taxon>Bacillati</taxon>
        <taxon>Mycoplasmatota</taxon>
        <taxon>Mollicutes</taxon>
        <taxon>Acholeplasmatales</taxon>
        <taxon>Acholeplasmataceae</taxon>
        <taxon>Candidatus Phytoplasma</taxon>
        <taxon>16SrI (Aster yellows group)</taxon>
    </lineage>
</organism>
<feature type="chain" id="PRO_0000064787" description="Unknown 31.6 kDa protein from 2D-PAGE">
    <location>
        <begin position="1"/>
        <end position="33" status="greater than"/>
    </location>
</feature>
<feature type="non-terminal residue">
    <location>
        <position position="33"/>
    </location>
</feature>
<name>B31K_ONYPH</name>
<keyword id="KW-0903">Direct protein sequencing</keyword>
<sequence>DQDDDIENVITLIETKENQTEQIKXQXXQLLQD</sequence>